<evidence type="ECO:0000255" key="1">
    <source>
        <dbReference type="HAMAP-Rule" id="MF_03027"/>
    </source>
</evidence>
<evidence type="ECO:0000256" key="2">
    <source>
        <dbReference type="SAM" id="MobiDB-lite"/>
    </source>
</evidence>
<accession>B4LKS9</accession>
<dbReference type="EMBL" id="CH940648">
    <property type="protein sequence ID" value="EDW61802.1"/>
    <property type="molecule type" value="Genomic_DNA"/>
</dbReference>
<dbReference type="SMR" id="B4LKS9"/>
<dbReference type="FunCoup" id="B4LKS9">
    <property type="interactions" value="1324"/>
</dbReference>
<dbReference type="STRING" id="7244.B4LKS9"/>
<dbReference type="EnsemblMetazoa" id="FBtr0238171">
    <property type="protein sequence ID" value="FBpp0236663"/>
    <property type="gene ID" value="FBgn0209359"/>
</dbReference>
<dbReference type="EnsemblMetazoa" id="XM_002050573.3">
    <property type="protein sequence ID" value="XP_002050609.1"/>
    <property type="gene ID" value="LOC6624813"/>
</dbReference>
<dbReference type="GeneID" id="6624813"/>
<dbReference type="KEGG" id="dvi:6624813"/>
<dbReference type="eggNOG" id="KOG0650">
    <property type="taxonomic scope" value="Eukaryota"/>
</dbReference>
<dbReference type="HOGENOM" id="CLU_011390_2_0_1"/>
<dbReference type="InParanoid" id="B4LKS9"/>
<dbReference type="OMA" id="MRPAKGE"/>
<dbReference type="OrthoDB" id="5571054at2759"/>
<dbReference type="PhylomeDB" id="B4LKS9"/>
<dbReference type="Proteomes" id="UP000008792">
    <property type="component" value="Unassembled WGS sequence"/>
</dbReference>
<dbReference type="GO" id="GO:0005654">
    <property type="term" value="C:nucleoplasm"/>
    <property type="evidence" value="ECO:0007669"/>
    <property type="project" value="UniProtKB-SubCell"/>
</dbReference>
<dbReference type="GO" id="GO:0070545">
    <property type="term" value="C:PeBoW complex"/>
    <property type="evidence" value="ECO:0007669"/>
    <property type="project" value="TreeGrafter"/>
</dbReference>
<dbReference type="GO" id="GO:0030687">
    <property type="term" value="C:preribosome, large subunit precursor"/>
    <property type="evidence" value="ECO:0007669"/>
    <property type="project" value="UniProtKB-UniRule"/>
</dbReference>
<dbReference type="GO" id="GO:0043021">
    <property type="term" value="F:ribonucleoprotein complex binding"/>
    <property type="evidence" value="ECO:0007669"/>
    <property type="project" value="UniProtKB-UniRule"/>
</dbReference>
<dbReference type="GO" id="GO:0000466">
    <property type="term" value="P:maturation of 5.8S rRNA from tricistronic rRNA transcript (SSU-rRNA, 5.8S rRNA, LSU-rRNA)"/>
    <property type="evidence" value="ECO:0007669"/>
    <property type="project" value="UniProtKB-UniRule"/>
</dbReference>
<dbReference type="GO" id="GO:0000463">
    <property type="term" value="P:maturation of LSU-rRNA from tricistronic rRNA transcript (SSU-rRNA, 5.8S rRNA, LSU-rRNA)"/>
    <property type="evidence" value="ECO:0007669"/>
    <property type="project" value="UniProtKB-UniRule"/>
</dbReference>
<dbReference type="GO" id="GO:0035206">
    <property type="term" value="P:regulation of hemocyte proliferation"/>
    <property type="evidence" value="ECO:0007669"/>
    <property type="project" value="EnsemblMetazoa"/>
</dbReference>
<dbReference type="CDD" id="cd00200">
    <property type="entry name" value="WD40"/>
    <property type="match status" value="1"/>
</dbReference>
<dbReference type="FunFam" id="2.130.10.10:FF:000061">
    <property type="entry name" value="Ribosome biogenesis protein BOP1 homolog"/>
    <property type="match status" value="1"/>
</dbReference>
<dbReference type="Gene3D" id="2.130.10.10">
    <property type="entry name" value="YVTN repeat-like/Quinoprotein amine dehydrogenase"/>
    <property type="match status" value="1"/>
</dbReference>
<dbReference type="HAMAP" id="MF_03027">
    <property type="entry name" value="BOP1"/>
    <property type="match status" value="1"/>
</dbReference>
<dbReference type="InterPro" id="IPR028598">
    <property type="entry name" value="BOP1/Erb1"/>
</dbReference>
<dbReference type="InterPro" id="IPR012953">
    <property type="entry name" value="BOP1_N_dom"/>
</dbReference>
<dbReference type="InterPro" id="IPR015943">
    <property type="entry name" value="WD40/YVTN_repeat-like_dom_sf"/>
</dbReference>
<dbReference type="InterPro" id="IPR019775">
    <property type="entry name" value="WD40_repeat_CS"/>
</dbReference>
<dbReference type="InterPro" id="IPR036322">
    <property type="entry name" value="WD40_repeat_dom_sf"/>
</dbReference>
<dbReference type="InterPro" id="IPR001680">
    <property type="entry name" value="WD40_rpt"/>
</dbReference>
<dbReference type="PANTHER" id="PTHR17605:SF0">
    <property type="entry name" value="RIBOSOME BIOGENESIS PROTEIN BOP1"/>
    <property type="match status" value="1"/>
</dbReference>
<dbReference type="PANTHER" id="PTHR17605">
    <property type="entry name" value="RIBOSOME BIOGENESIS PROTEIN BOP1 BLOCK OF PROLIFERATION 1 PROTEIN"/>
    <property type="match status" value="1"/>
</dbReference>
<dbReference type="Pfam" id="PF08145">
    <property type="entry name" value="BOP1NT"/>
    <property type="match status" value="1"/>
</dbReference>
<dbReference type="Pfam" id="PF00400">
    <property type="entry name" value="WD40"/>
    <property type="match status" value="3"/>
</dbReference>
<dbReference type="SMART" id="SM01035">
    <property type="entry name" value="BOP1NT"/>
    <property type="match status" value="1"/>
</dbReference>
<dbReference type="SMART" id="SM00320">
    <property type="entry name" value="WD40"/>
    <property type="match status" value="7"/>
</dbReference>
<dbReference type="SUPFAM" id="SSF50978">
    <property type="entry name" value="WD40 repeat-like"/>
    <property type="match status" value="1"/>
</dbReference>
<dbReference type="PROSITE" id="PS00678">
    <property type="entry name" value="WD_REPEATS_1"/>
    <property type="match status" value="1"/>
</dbReference>
<dbReference type="PROSITE" id="PS50082">
    <property type="entry name" value="WD_REPEATS_2"/>
    <property type="match status" value="1"/>
</dbReference>
<dbReference type="PROSITE" id="PS50294">
    <property type="entry name" value="WD_REPEATS_REGION"/>
    <property type="match status" value="2"/>
</dbReference>
<sequence>MTKKQAIKRKVKEPEPTNEQSSASEPSDNEEDDDLLQAVKDPGEDTTDDEGIDQEYQSDSSEDLEFESDEEGNYLGRKANNEAEGDAEEDEDDDEEEDEDSDEASEDNDDAEEEKPSSSMTAAVQTKVEPIIQIIPRDPSKPEYEDSDTSDEEDIRNTVGNIPMHWYDEYKHIGYDWDAKKIVKPPKGDQIDDFLRKIEDPNFWRTVKDPQTGQEVLLTDEDIALIKRVNSGRIPNAEHDEYAPWIEWFTSEVEKMPIKNVPDHKRSFLPSVSEKKKVSRMVHALKMGWMKTTEEVEREKQKKRGPKFYMLWETDTGRESMRRIHDPVSAPKRDLPGHAESYNPPPEYLFDEKETKEWLKQKDEPHKRKLHFMPQKFKSLREVPAYSRYLRERFLRCLDLYLCPRAKRVKLNIDAEYLIPKLPSPRDLQPFPTVESLVYRGHTDLVRSVSVEPKGEYMASGSDDKTVKIWEIATGRCIRTIETNDVVRCVAWCPNAKLSIIAVATGSRLLLINPKVGDKLLIKKTDDLLAASPSLDVIDNERIKTAVQWSNAEPEEQEKGVRVVITHFKPIRQVTWHGRGDYLATVMPEGANRSALIHQLSKRRSQIPFSKSKGLIQCVLFHPVKPCFFVATQHNIRIYDLVKQELIKKLLTNSKWISGMSIHPKGDNLLVSTYDKKMLWFDLDLSTKPYQTMRLHRNAVRSVAFHLRYPLFASGSDDQAVIVSHGMVYNDLLQNPLIVPLKKLQTHEKRDEFGVLDVSWHPVQPWVFSTGADCTIRLYT</sequence>
<gene>
    <name type="ORF">GJ22246</name>
</gene>
<proteinExistence type="inferred from homology"/>
<feature type="chain" id="PRO_0000370402" description="Ribosome biogenesis protein BOP1 homolog">
    <location>
        <begin position="1"/>
        <end position="780"/>
    </location>
</feature>
<feature type="repeat" description="WD 1">
    <location>
        <begin position="441"/>
        <end position="482"/>
    </location>
</feature>
<feature type="repeat" description="WD 2">
    <location>
        <begin position="484"/>
        <end position="522"/>
    </location>
</feature>
<feature type="repeat" description="WD 3">
    <location>
        <begin position="566"/>
        <end position="608"/>
    </location>
</feature>
<feature type="repeat" description="WD 4">
    <location>
        <begin position="611"/>
        <end position="649"/>
    </location>
</feature>
<feature type="repeat" description="WD 5">
    <location>
        <begin position="652"/>
        <end position="691"/>
    </location>
</feature>
<feature type="repeat" description="WD 6">
    <location>
        <begin position="695"/>
        <end position="734"/>
    </location>
</feature>
<feature type="repeat" description="WD 7">
    <location>
        <begin position="750"/>
        <end position="780"/>
    </location>
</feature>
<feature type="region of interest" description="Disordered" evidence="2">
    <location>
        <begin position="1"/>
        <end position="155"/>
    </location>
</feature>
<feature type="compositionally biased region" description="Basic residues" evidence="2">
    <location>
        <begin position="1"/>
        <end position="11"/>
    </location>
</feature>
<feature type="compositionally biased region" description="Polar residues" evidence="2">
    <location>
        <begin position="17"/>
        <end position="26"/>
    </location>
</feature>
<feature type="compositionally biased region" description="Acidic residues" evidence="2">
    <location>
        <begin position="44"/>
        <end position="53"/>
    </location>
</feature>
<feature type="compositionally biased region" description="Acidic residues" evidence="2">
    <location>
        <begin position="60"/>
        <end position="72"/>
    </location>
</feature>
<feature type="compositionally biased region" description="Acidic residues" evidence="2">
    <location>
        <begin position="83"/>
        <end position="113"/>
    </location>
</feature>
<feature type="compositionally biased region" description="Acidic residues" evidence="2">
    <location>
        <begin position="145"/>
        <end position="154"/>
    </location>
</feature>
<comment type="function">
    <text evidence="1">Required for maturation of ribosomal RNAs and formation of the large ribosomal subunit.</text>
</comment>
<comment type="subcellular location">
    <subcellularLocation>
        <location evidence="1">Nucleus</location>
        <location evidence="1">Nucleolus</location>
    </subcellularLocation>
    <subcellularLocation>
        <location evidence="1">Nucleus</location>
        <location evidence="1">Nucleoplasm</location>
    </subcellularLocation>
</comment>
<comment type="similarity">
    <text evidence="1">Belongs to the WD repeat BOP1/ERB1 family.</text>
</comment>
<protein>
    <recommendedName>
        <fullName evidence="1">Ribosome biogenesis protein BOP1 homolog</fullName>
    </recommendedName>
</protein>
<reference key="1">
    <citation type="journal article" date="2007" name="Nature">
        <title>Evolution of genes and genomes on the Drosophila phylogeny.</title>
        <authorList>
            <consortium name="Drosophila 12 genomes consortium"/>
        </authorList>
    </citation>
    <scope>NUCLEOTIDE SEQUENCE [LARGE SCALE GENOMIC DNA]</scope>
    <source>
        <strain>Tucson 15010-1051.87</strain>
    </source>
</reference>
<organism>
    <name type="scientific">Drosophila virilis</name>
    <name type="common">Fruit fly</name>
    <dbReference type="NCBI Taxonomy" id="7244"/>
    <lineage>
        <taxon>Eukaryota</taxon>
        <taxon>Metazoa</taxon>
        <taxon>Ecdysozoa</taxon>
        <taxon>Arthropoda</taxon>
        <taxon>Hexapoda</taxon>
        <taxon>Insecta</taxon>
        <taxon>Pterygota</taxon>
        <taxon>Neoptera</taxon>
        <taxon>Endopterygota</taxon>
        <taxon>Diptera</taxon>
        <taxon>Brachycera</taxon>
        <taxon>Muscomorpha</taxon>
        <taxon>Ephydroidea</taxon>
        <taxon>Drosophilidae</taxon>
        <taxon>Drosophila</taxon>
    </lineage>
</organism>
<keyword id="KW-0539">Nucleus</keyword>
<keyword id="KW-1185">Reference proteome</keyword>
<keyword id="KW-0677">Repeat</keyword>
<keyword id="KW-0690">Ribosome biogenesis</keyword>
<keyword id="KW-0698">rRNA processing</keyword>
<keyword id="KW-0853">WD repeat</keyword>
<name>BOP1_DROVI</name>